<proteinExistence type="inferred from homology"/>
<name>TRHO_SHEB2</name>
<gene>
    <name evidence="1" type="primary">trhO</name>
    <name type="ordered locus">Sbal223_1981</name>
</gene>
<reference key="1">
    <citation type="submission" date="2008-12" db="EMBL/GenBank/DDBJ databases">
        <title>Complete sequence of chromosome of Shewanella baltica OS223.</title>
        <authorList>
            <consortium name="US DOE Joint Genome Institute"/>
            <person name="Lucas S."/>
            <person name="Copeland A."/>
            <person name="Lapidus A."/>
            <person name="Glavina del Rio T."/>
            <person name="Dalin E."/>
            <person name="Tice H."/>
            <person name="Bruce D."/>
            <person name="Goodwin L."/>
            <person name="Pitluck S."/>
            <person name="Chertkov O."/>
            <person name="Meincke L."/>
            <person name="Brettin T."/>
            <person name="Detter J.C."/>
            <person name="Han C."/>
            <person name="Kuske C.R."/>
            <person name="Larimer F."/>
            <person name="Land M."/>
            <person name="Hauser L."/>
            <person name="Kyrpides N."/>
            <person name="Ovchinnikova G."/>
            <person name="Brettar I."/>
            <person name="Rodrigues J."/>
            <person name="Konstantinidis K."/>
            <person name="Tiedje J."/>
        </authorList>
    </citation>
    <scope>NUCLEOTIDE SEQUENCE [LARGE SCALE GENOMIC DNA]</scope>
    <source>
        <strain>OS223</strain>
    </source>
</reference>
<feature type="chain" id="PRO_1000135475" description="tRNA uridine(34) hydroxylase">
    <location>
        <begin position="1"/>
        <end position="334"/>
    </location>
</feature>
<feature type="domain" description="Rhodanese" evidence="1">
    <location>
        <begin position="123"/>
        <end position="217"/>
    </location>
</feature>
<feature type="active site" description="Cysteine persulfide intermediate" evidence="1">
    <location>
        <position position="177"/>
    </location>
</feature>
<evidence type="ECO:0000255" key="1">
    <source>
        <dbReference type="HAMAP-Rule" id="MF_00469"/>
    </source>
</evidence>
<keyword id="KW-0560">Oxidoreductase</keyword>
<keyword id="KW-0819">tRNA processing</keyword>
<organism>
    <name type="scientific">Shewanella baltica (strain OS223)</name>
    <dbReference type="NCBI Taxonomy" id="407976"/>
    <lineage>
        <taxon>Bacteria</taxon>
        <taxon>Pseudomonadati</taxon>
        <taxon>Pseudomonadota</taxon>
        <taxon>Gammaproteobacteria</taxon>
        <taxon>Alteromonadales</taxon>
        <taxon>Shewanellaceae</taxon>
        <taxon>Shewanella</taxon>
    </lineage>
</organism>
<comment type="function">
    <text evidence="1">Catalyzes oxygen-dependent 5-hydroxyuridine (ho5U) modification at position 34 in tRNAs.</text>
</comment>
<comment type="catalytic activity">
    <reaction evidence="1">
        <text>uridine(34) in tRNA + AH2 + O2 = 5-hydroxyuridine(34) in tRNA + A + H2O</text>
        <dbReference type="Rhea" id="RHEA:64224"/>
        <dbReference type="Rhea" id="RHEA-COMP:11727"/>
        <dbReference type="Rhea" id="RHEA-COMP:13381"/>
        <dbReference type="ChEBI" id="CHEBI:13193"/>
        <dbReference type="ChEBI" id="CHEBI:15377"/>
        <dbReference type="ChEBI" id="CHEBI:15379"/>
        <dbReference type="ChEBI" id="CHEBI:17499"/>
        <dbReference type="ChEBI" id="CHEBI:65315"/>
        <dbReference type="ChEBI" id="CHEBI:136877"/>
    </reaction>
</comment>
<comment type="similarity">
    <text evidence="1">Belongs to the TrhO family.</text>
</comment>
<dbReference type="EC" id="1.14.-.-" evidence="1"/>
<dbReference type="EMBL" id="CP001252">
    <property type="protein sequence ID" value="ACK46485.1"/>
    <property type="molecule type" value="Genomic_DNA"/>
</dbReference>
<dbReference type="RefSeq" id="WP_012587538.1">
    <property type="nucleotide sequence ID" value="NC_011663.1"/>
</dbReference>
<dbReference type="SMR" id="B8E9F2"/>
<dbReference type="KEGG" id="sbp:Sbal223_1981"/>
<dbReference type="HOGENOM" id="CLU_038878_0_0_6"/>
<dbReference type="Proteomes" id="UP000002507">
    <property type="component" value="Chromosome"/>
</dbReference>
<dbReference type="GO" id="GO:0016705">
    <property type="term" value="F:oxidoreductase activity, acting on paired donors, with incorporation or reduction of molecular oxygen"/>
    <property type="evidence" value="ECO:0007669"/>
    <property type="project" value="UniProtKB-UniRule"/>
</dbReference>
<dbReference type="GO" id="GO:0006400">
    <property type="term" value="P:tRNA modification"/>
    <property type="evidence" value="ECO:0007669"/>
    <property type="project" value="UniProtKB-UniRule"/>
</dbReference>
<dbReference type="CDD" id="cd01518">
    <property type="entry name" value="RHOD_YceA"/>
    <property type="match status" value="1"/>
</dbReference>
<dbReference type="Gene3D" id="3.30.70.100">
    <property type="match status" value="1"/>
</dbReference>
<dbReference type="Gene3D" id="3.40.250.10">
    <property type="entry name" value="Rhodanese-like domain"/>
    <property type="match status" value="1"/>
</dbReference>
<dbReference type="HAMAP" id="MF_00469">
    <property type="entry name" value="TrhO"/>
    <property type="match status" value="1"/>
</dbReference>
<dbReference type="InterPro" id="IPR001763">
    <property type="entry name" value="Rhodanese-like_dom"/>
</dbReference>
<dbReference type="InterPro" id="IPR036873">
    <property type="entry name" value="Rhodanese-like_dom_sf"/>
</dbReference>
<dbReference type="InterPro" id="IPR020936">
    <property type="entry name" value="TrhO"/>
</dbReference>
<dbReference type="InterPro" id="IPR040503">
    <property type="entry name" value="TRHO_N"/>
</dbReference>
<dbReference type="NCBIfam" id="NF001136">
    <property type="entry name" value="PRK00142.1-4"/>
    <property type="match status" value="1"/>
</dbReference>
<dbReference type="PANTHER" id="PTHR43268:SF3">
    <property type="entry name" value="RHODANESE-LIKE DOMAIN-CONTAINING PROTEIN 7-RELATED"/>
    <property type="match status" value="1"/>
</dbReference>
<dbReference type="PANTHER" id="PTHR43268">
    <property type="entry name" value="THIOSULFATE SULFURTRANSFERASE/RHODANESE-LIKE DOMAIN-CONTAINING PROTEIN 2"/>
    <property type="match status" value="1"/>
</dbReference>
<dbReference type="Pfam" id="PF00581">
    <property type="entry name" value="Rhodanese"/>
    <property type="match status" value="1"/>
</dbReference>
<dbReference type="Pfam" id="PF17773">
    <property type="entry name" value="UPF0176_N"/>
    <property type="match status" value="1"/>
</dbReference>
<dbReference type="SMART" id="SM00450">
    <property type="entry name" value="RHOD"/>
    <property type="match status" value="1"/>
</dbReference>
<dbReference type="SUPFAM" id="SSF52821">
    <property type="entry name" value="Rhodanese/Cell cycle control phosphatase"/>
    <property type="match status" value="1"/>
</dbReference>
<dbReference type="PROSITE" id="PS50206">
    <property type="entry name" value="RHODANESE_3"/>
    <property type="match status" value="1"/>
</dbReference>
<sequence>MTKVVVCALYKFVSLPHFESIRAPLLAMMEQAEIKGTLLLASEGINGTVAGTQEAIEALLVWLNGQNGLDNIVHKLSFDDEMPFYRTKVKLKNEIVTMGVEGIDPLKVVGTYVKPQDWNALISDPDVILVDTRNDYEVQIGTFKNAVNPVTETFREFPEYVKQNLDPAKHKKVAMFCTGGIRCEKSTAYLKEQGFDEVYHLEGGILKYLEEVKAEESLWEGECFVFDNRVAVNHDLKKGQYDQCNACRMPITEVEKQSPAYVQGVSCPHCIDKISDEQRKRFVERERQVNLAKARNEAHIGSDVNQVIEARREKKEAQRRLAAEKNNAKKSQVL</sequence>
<accession>B8E9F2</accession>
<protein>
    <recommendedName>
        <fullName evidence="1">tRNA uridine(34) hydroxylase</fullName>
        <ecNumber evidence="1">1.14.-.-</ecNumber>
    </recommendedName>
    <alternativeName>
        <fullName evidence="1">tRNA hydroxylation protein O</fullName>
    </alternativeName>
</protein>